<keyword id="KW-1003">Cell membrane</keyword>
<keyword id="KW-0210">Decarboxylase</keyword>
<keyword id="KW-0456">Lyase</keyword>
<keyword id="KW-0472">Membrane</keyword>
<keyword id="KW-0831">Ubiquinone biosynthesis</keyword>
<evidence type="ECO:0000250" key="1"/>
<evidence type="ECO:0000305" key="2"/>
<dbReference type="EC" id="4.1.1.-"/>
<dbReference type="EMBL" id="BA000037">
    <property type="protein sequence ID" value="BAC95943.1"/>
    <property type="molecule type" value="Genomic_DNA"/>
</dbReference>
<dbReference type="RefSeq" id="WP_011151393.1">
    <property type="nucleotide sequence ID" value="NC_005139.1"/>
</dbReference>
<dbReference type="SMR" id="Q7MGQ1"/>
<dbReference type="STRING" id="672.VV93_v1c29000"/>
<dbReference type="KEGG" id="vvy:VV3179"/>
<dbReference type="PATRIC" id="fig|196600.6.peg.3147"/>
<dbReference type="eggNOG" id="COG0043">
    <property type="taxonomic scope" value="Bacteria"/>
</dbReference>
<dbReference type="HOGENOM" id="CLU_023348_4_0_6"/>
<dbReference type="UniPathway" id="UPA00232"/>
<dbReference type="Proteomes" id="UP000002675">
    <property type="component" value="Chromosome I"/>
</dbReference>
<dbReference type="GO" id="GO:0005829">
    <property type="term" value="C:cytosol"/>
    <property type="evidence" value="ECO:0007669"/>
    <property type="project" value="TreeGrafter"/>
</dbReference>
<dbReference type="GO" id="GO:0005886">
    <property type="term" value="C:plasma membrane"/>
    <property type="evidence" value="ECO:0007669"/>
    <property type="project" value="UniProtKB-SubCell"/>
</dbReference>
<dbReference type="GO" id="GO:0008694">
    <property type="term" value="F:3-octaprenyl-4-hydroxybenzoate carboxy-lyase activity"/>
    <property type="evidence" value="ECO:0007669"/>
    <property type="project" value="TreeGrafter"/>
</dbReference>
<dbReference type="GO" id="GO:0006744">
    <property type="term" value="P:ubiquinone biosynthetic process"/>
    <property type="evidence" value="ECO:0007669"/>
    <property type="project" value="UniProtKB-UniPathway"/>
</dbReference>
<dbReference type="FunFam" id="3.40.1670.10:FF:000001">
    <property type="entry name" value="3-octaprenyl-4-hydroxybenzoate carboxy-lyase"/>
    <property type="match status" value="1"/>
</dbReference>
<dbReference type="Gene3D" id="1.20.5.570">
    <property type="entry name" value="Single helix bin"/>
    <property type="match status" value="1"/>
</dbReference>
<dbReference type="Gene3D" id="3.40.1670.10">
    <property type="entry name" value="UbiD C-terminal domain-like"/>
    <property type="match status" value="2"/>
</dbReference>
<dbReference type="InterPro" id="IPR002830">
    <property type="entry name" value="UbiD"/>
</dbReference>
<dbReference type="InterPro" id="IPR049381">
    <property type="entry name" value="UbiD-like_C"/>
</dbReference>
<dbReference type="InterPro" id="IPR049383">
    <property type="entry name" value="UbiD-like_N"/>
</dbReference>
<dbReference type="InterPro" id="IPR048304">
    <property type="entry name" value="UbiD_Rift_dom"/>
</dbReference>
<dbReference type="NCBIfam" id="NF008175">
    <property type="entry name" value="PRK10922.1"/>
    <property type="match status" value="1"/>
</dbReference>
<dbReference type="NCBIfam" id="TIGR00148">
    <property type="entry name" value="UbiD family decarboxylase"/>
    <property type="match status" value="1"/>
</dbReference>
<dbReference type="PANTHER" id="PTHR30108">
    <property type="entry name" value="3-OCTAPRENYL-4-HYDROXYBENZOATE CARBOXY-LYASE-RELATED"/>
    <property type="match status" value="1"/>
</dbReference>
<dbReference type="PANTHER" id="PTHR30108:SF17">
    <property type="entry name" value="FERULIC ACID DECARBOXYLASE 1"/>
    <property type="match status" value="1"/>
</dbReference>
<dbReference type="Pfam" id="PF01977">
    <property type="entry name" value="UbiD"/>
    <property type="match status" value="1"/>
</dbReference>
<dbReference type="Pfam" id="PF20696">
    <property type="entry name" value="UbiD_C"/>
    <property type="match status" value="2"/>
</dbReference>
<dbReference type="Pfam" id="PF20695">
    <property type="entry name" value="UbiD_N"/>
    <property type="match status" value="1"/>
</dbReference>
<dbReference type="SUPFAM" id="SSF50475">
    <property type="entry name" value="FMN-binding split barrel"/>
    <property type="match status" value="1"/>
</dbReference>
<dbReference type="SUPFAM" id="SSF143968">
    <property type="entry name" value="UbiD C-terminal domain-like"/>
    <property type="match status" value="2"/>
</dbReference>
<accession>Q7MGQ1</accession>
<proteinExistence type="inferred from homology"/>
<reference key="1">
    <citation type="journal article" date="2003" name="Genome Res.">
        <title>Comparative genome analysis of Vibrio vulnificus, a marine pathogen.</title>
        <authorList>
            <person name="Chen C.-Y."/>
            <person name="Wu K.-M."/>
            <person name="Chang Y.-C."/>
            <person name="Chang C.-H."/>
            <person name="Tsai H.-C."/>
            <person name="Liao T.-L."/>
            <person name="Liu Y.-M."/>
            <person name="Chen H.-J."/>
            <person name="Shen A.B.-T."/>
            <person name="Li J.-C."/>
            <person name="Su T.-L."/>
            <person name="Shao C.-P."/>
            <person name="Lee C.-T."/>
            <person name="Hor L.-I."/>
            <person name="Tsai S.-F."/>
        </authorList>
    </citation>
    <scope>NUCLEOTIDE SEQUENCE [LARGE SCALE GENOMIC DNA]</scope>
    <source>
        <strain>YJ016</strain>
    </source>
</reference>
<name>UBID_VIBVY</name>
<sequence>MSFKDLRDFLNHLEKKGQLKRITHPVDPAYEMTEISDRTLRAGGPALLFENPIGYDIPVLTNLFGTAERVAMGMGREQVKELREVGQWLAYLKEPEPPKGFKDALDKLPVFKQVLNMPVKRLRKAACQEVVWQGEEVDLDKIPVMSCWQDDVAPLLTWGLTITRGPNKKRQNLGIYRQQKIAKNKIIMRWLAHRGGALDLRDWMEKYPGKPFPVSVAFGADPATILGAVTPVPDTLSEYAFAGLLRGSKTEVVKSASNDLEIPVSAEIVLEGYIDPNEYADEGPYGDHTGYYNEKEKHHVFTITHITMRKEPIYHSTYTGRPPDEPAVLGVALNEVFVPILQKQFPEIEDFYLPPEGCSYRMAVVTMKKQYPGHAKRVMMGVWSFLRQFMYTKYVVVCDESVNARDWDDVVKAMTENMNPILDSLFIESTPIDSLDFASPVAGLGSKMGLDATIKWEAELALQGATTSTEFASQIGFDVNALKAVHPLISDIYVPGVASGQFMVVKINKTHAGQCKEVVESLWQVESVKQRNKFIVVCDDDVKADDWHDIIWAITTRMDPARDTLKIDGSKSCSAKLVFDATNKYSEEITREWGKPIKKDPKLVAKVDALWQEFGIL</sequence>
<comment type="function">
    <text evidence="1">Catalyzes the decarboxylation of 3-octaprenyl-4-hydroxy benzoate to 2-octaprenylphenol.</text>
</comment>
<comment type="cofactor">
    <cofactor evidence="1">
        <name>a divalent metal cation</name>
        <dbReference type="ChEBI" id="CHEBI:60240"/>
    </cofactor>
</comment>
<comment type="pathway">
    <text>Cofactor biosynthesis; ubiquinone biosynthesis.</text>
</comment>
<comment type="subunit">
    <text evidence="1">Homohexamer.</text>
</comment>
<comment type="subcellular location">
    <subcellularLocation>
        <location evidence="1">Cell membrane</location>
        <topology evidence="1">Peripheral membrane protein</topology>
    </subcellularLocation>
</comment>
<comment type="similarity">
    <text evidence="2">Belongs to the UbiD family.</text>
</comment>
<feature type="chain" id="PRO_0000267708" description="3-octaprenyl-4-hydroxybenzoate carboxy-lyase">
    <location>
        <begin position="1"/>
        <end position="617"/>
    </location>
</feature>
<feature type="region of interest" description="Unknown insert">
    <location>
        <begin position="460"/>
        <end position="588"/>
    </location>
</feature>
<gene>
    <name type="primary">ubiD</name>
    <name type="ordered locus">VV3179</name>
</gene>
<organism>
    <name type="scientific">Vibrio vulnificus (strain YJ016)</name>
    <dbReference type="NCBI Taxonomy" id="196600"/>
    <lineage>
        <taxon>Bacteria</taxon>
        <taxon>Pseudomonadati</taxon>
        <taxon>Pseudomonadota</taxon>
        <taxon>Gammaproteobacteria</taxon>
        <taxon>Vibrionales</taxon>
        <taxon>Vibrionaceae</taxon>
        <taxon>Vibrio</taxon>
    </lineage>
</organism>
<protein>
    <recommendedName>
        <fullName>3-octaprenyl-4-hydroxybenzoate carboxy-lyase</fullName>
        <ecNumber>4.1.1.-</ecNumber>
    </recommendedName>
    <alternativeName>
        <fullName>Polyprenyl p-hydroxybenzoate decarboxylase</fullName>
    </alternativeName>
</protein>